<gene>
    <name evidence="6" type="primary">cerk-1</name>
    <name evidence="6" type="ORF">T10B11.2</name>
</gene>
<organism>
    <name type="scientific">Caenorhabditis elegans</name>
    <dbReference type="NCBI Taxonomy" id="6239"/>
    <lineage>
        <taxon>Eukaryota</taxon>
        <taxon>Metazoa</taxon>
        <taxon>Ecdysozoa</taxon>
        <taxon>Nematoda</taxon>
        <taxon>Chromadorea</taxon>
        <taxon>Rhabditida</taxon>
        <taxon>Rhabditina</taxon>
        <taxon>Rhabditomorpha</taxon>
        <taxon>Rhabditoidea</taxon>
        <taxon>Rhabditidae</taxon>
        <taxon>Peloderinae</taxon>
        <taxon>Caenorhabditis</taxon>
    </lineage>
</organism>
<dbReference type="EC" id="2.7.1.138"/>
<dbReference type="EMBL" id="FO080731">
    <property type="protein sequence ID" value="CCD66240.1"/>
    <property type="molecule type" value="Genomic_DNA"/>
</dbReference>
<dbReference type="PIR" id="T33517">
    <property type="entry name" value="T33517"/>
</dbReference>
<dbReference type="RefSeq" id="NP_491977.1">
    <property type="nucleotide sequence ID" value="NM_059576.7"/>
</dbReference>
<dbReference type="SMR" id="Q9TZI1"/>
<dbReference type="BioGRID" id="37868">
    <property type="interactions" value="2"/>
</dbReference>
<dbReference type="DIP" id="DIP-25504N"/>
<dbReference type="FunCoup" id="Q9TZI1">
    <property type="interactions" value="2373"/>
</dbReference>
<dbReference type="STRING" id="6239.T10B11.2.1"/>
<dbReference type="PaxDb" id="6239-T10B11.2"/>
<dbReference type="PeptideAtlas" id="Q9TZI1"/>
<dbReference type="EnsemblMetazoa" id="T10B11.2.1">
    <property type="protein sequence ID" value="T10B11.2.1"/>
    <property type="gene ID" value="WBGene00020398"/>
</dbReference>
<dbReference type="GeneID" id="172423"/>
<dbReference type="KEGG" id="cel:CELE_T10B11.2"/>
<dbReference type="UCSC" id="T10B11.2">
    <property type="organism name" value="c. elegans"/>
</dbReference>
<dbReference type="AGR" id="WB:WBGene00020398"/>
<dbReference type="CTD" id="172423"/>
<dbReference type="WormBase" id="T10B11.2">
    <property type="protein sequence ID" value="CE18241"/>
    <property type="gene ID" value="WBGene00020398"/>
    <property type="gene designation" value="cerk-1"/>
</dbReference>
<dbReference type="eggNOG" id="KOG1115">
    <property type="taxonomic scope" value="Eukaryota"/>
</dbReference>
<dbReference type="GeneTree" id="ENSGT00940000168717"/>
<dbReference type="HOGENOM" id="CLU_472760_0_0_1"/>
<dbReference type="InParanoid" id="Q9TZI1"/>
<dbReference type="OMA" id="TTSERDY"/>
<dbReference type="OrthoDB" id="530923at2759"/>
<dbReference type="PhylomeDB" id="Q9TZI1"/>
<dbReference type="Reactome" id="R-CEL-9840309">
    <property type="pathway name" value="Glycosphingolipid biosynthesis"/>
</dbReference>
<dbReference type="UniPathway" id="UPA00222"/>
<dbReference type="PRO" id="PR:Q9TZI1"/>
<dbReference type="Proteomes" id="UP000001940">
    <property type="component" value="Chromosome I"/>
</dbReference>
<dbReference type="Bgee" id="WBGene00020398">
    <property type="expression patterns" value="Expressed in germ line (C elegans) and 4 other cell types or tissues"/>
</dbReference>
<dbReference type="GO" id="GO:0016020">
    <property type="term" value="C:membrane"/>
    <property type="evidence" value="ECO:0007669"/>
    <property type="project" value="GOC"/>
</dbReference>
<dbReference type="GO" id="GO:0005524">
    <property type="term" value="F:ATP binding"/>
    <property type="evidence" value="ECO:0007669"/>
    <property type="project" value="UniProtKB-KW"/>
</dbReference>
<dbReference type="GO" id="GO:0001729">
    <property type="term" value="F:ceramide kinase activity"/>
    <property type="evidence" value="ECO:0000318"/>
    <property type="project" value="GO_Central"/>
</dbReference>
<dbReference type="GO" id="GO:0006672">
    <property type="term" value="P:ceramide metabolic process"/>
    <property type="evidence" value="ECO:0000318"/>
    <property type="project" value="GO_Central"/>
</dbReference>
<dbReference type="Gene3D" id="2.60.200.40">
    <property type="match status" value="1"/>
</dbReference>
<dbReference type="Gene3D" id="3.40.50.10330">
    <property type="entry name" value="Probable inorganic polyphosphate/atp-NAD kinase, domain 1"/>
    <property type="match status" value="1"/>
</dbReference>
<dbReference type="InterPro" id="IPR017438">
    <property type="entry name" value="ATP-NAD_kinase_N"/>
</dbReference>
<dbReference type="InterPro" id="IPR001206">
    <property type="entry name" value="Diacylglycerol_kinase_cat_dom"/>
</dbReference>
<dbReference type="InterPro" id="IPR050187">
    <property type="entry name" value="Lipid_Phosphate_FormReg"/>
</dbReference>
<dbReference type="InterPro" id="IPR016064">
    <property type="entry name" value="NAD/diacylglycerol_kinase_sf"/>
</dbReference>
<dbReference type="PANTHER" id="PTHR12358:SF111">
    <property type="entry name" value="CERAMIDE KINASE, ISOFORM A"/>
    <property type="match status" value="1"/>
</dbReference>
<dbReference type="PANTHER" id="PTHR12358">
    <property type="entry name" value="SPHINGOSINE KINASE"/>
    <property type="match status" value="1"/>
</dbReference>
<dbReference type="Pfam" id="PF00781">
    <property type="entry name" value="DAGK_cat"/>
    <property type="match status" value="1"/>
</dbReference>
<dbReference type="SUPFAM" id="SSF111331">
    <property type="entry name" value="NAD kinase/diacylglycerol kinase-like"/>
    <property type="match status" value="1"/>
</dbReference>
<dbReference type="PROSITE" id="PS50146">
    <property type="entry name" value="DAGK"/>
    <property type="match status" value="1"/>
</dbReference>
<proteinExistence type="inferred from homology"/>
<feature type="chain" id="PRO_0000421274" description="Ceramide kinase 1">
    <location>
        <begin position="1"/>
        <end position="549"/>
    </location>
</feature>
<feature type="domain" description="DAGKc" evidence="3">
    <location>
        <begin position="162"/>
        <end position="316"/>
    </location>
</feature>
<feature type="active site" description="Proton donor/acceptor" evidence="1">
    <location>
        <position position="235"/>
    </location>
</feature>
<feature type="binding site" evidence="3">
    <location>
        <begin position="172"/>
        <end position="174"/>
    </location>
    <ligand>
        <name>ATP</name>
        <dbReference type="ChEBI" id="CHEBI:30616"/>
    </ligand>
</feature>
<feature type="binding site" evidence="3">
    <location>
        <begin position="205"/>
        <end position="209"/>
    </location>
    <ligand>
        <name>ATP</name>
        <dbReference type="ChEBI" id="CHEBI:30616"/>
    </ligand>
</feature>
<feature type="binding site" evidence="1">
    <location>
        <begin position="233"/>
        <end position="236"/>
    </location>
    <ligand>
        <name>substrate</name>
    </ligand>
</feature>
<feature type="binding site" evidence="3">
    <location>
        <position position="240"/>
    </location>
    <ligand>
        <name>ATP</name>
        <dbReference type="ChEBI" id="CHEBI:30616"/>
    </ligand>
</feature>
<feature type="binding site" evidence="3">
    <location>
        <begin position="277"/>
        <end position="279"/>
    </location>
    <ligand>
        <name>ATP</name>
        <dbReference type="ChEBI" id="CHEBI:30616"/>
    </ligand>
</feature>
<feature type="binding site" evidence="3">
    <location>
        <position position="342"/>
    </location>
    <ligand>
        <name>ATP</name>
        <dbReference type="ChEBI" id="CHEBI:30616"/>
    </ligand>
</feature>
<feature type="binding site" evidence="3">
    <location>
        <position position="348"/>
    </location>
    <ligand>
        <name>ATP</name>
        <dbReference type="ChEBI" id="CHEBI:30616"/>
    </ligand>
</feature>
<feature type="binding site" evidence="3">
    <location>
        <begin position="500"/>
        <end position="502"/>
    </location>
    <ligand>
        <name>ATP</name>
        <dbReference type="ChEBI" id="CHEBI:30616"/>
    </ligand>
</feature>
<protein>
    <recommendedName>
        <fullName>Ceramide kinase 1</fullName>
        <ecNumber>2.7.1.138</ecNumber>
    </recommendedName>
</protein>
<accession>Q9TZI1</accession>
<sequence length="549" mass="62425">MPNSKKSKKGGDQQHVTIVPVEPVKGENVDTVAYSSRSRISGESGHLIADVQSPHAKKHRIIFDRDHNVFEFRLLDGSAKHIIVYRLDELLSTTCYPFKIKNGVPIIPTKPTTSDKTLYFNFVYKKDKQKWRLKQIPVIFYTTSERDYWHSLIDTTLRRVKNRPKNIIIFINPFGGNGKAQKIFKDNVDAFFWLTPGLRYKVVLTERANHARDYIVEMPPEQWSAIDGLVSVGGDGLFNELLSGALLRTQTDAGRNIDNPSSHLVTPHIRFGIIGAGSANSIVSTVHETNDHATSAVHIAIGSECNVDVCTVHQHQKLIRISANAISYGWLGDVLRDSEEYRCLGPIRYQWSALRTTIRHPIYRGMVQFSLSHKENVNPKDQLPPCLEPCPVCMKPQGNDKYDYHWHAEFTHVICCVIPTVTPFTPYGLAPFTGIGDGTLDLALVPRISRFHNMQFMRKVAMYGGKQLYELDPSLNCYRVTKWSYQPDADQEDPGVWNLDGEILEQPKDEPLHFKLHPQLISFFGRDAAMVKPTKRSFIKKRKSSIVYQ</sequence>
<reference key="1">
    <citation type="journal article" date="1998" name="Science">
        <title>Genome sequence of the nematode C. elegans: a platform for investigating biology.</title>
        <authorList>
            <consortium name="The C. elegans sequencing consortium"/>
        </authorList>
    </citation>
    <scope>NUCLEOTIDE SEQUENCE [LARGE SCALE GENOMIC DNA]</scope>
    <source>
        <strain>Bristol N2</strain>
    </source>
</reference>
<reference key="2">
    <citation type="journal article" date="2017" name="Chem. Sci.">
        <title>Structure and conserved function of iso-branched sphingoid bases from the nematode Caenorhabditis elegans.</title>
        <authorList>
            <person name="Hannich J.T."/>
            <person name="Mellal D."/>
            <person name="Feng S."/>
            <person name="Zumbuehl A."/>
            <person name="Riezman H."/>
        </authorList>
    </citation>
    <scope>FUNCTION</scope>
</reference>
<comment type="function">
    <text evidence="2 4">Catalyzes the phosphorylation of ceramide to form ceramide 1-phosphate (By similarity). C.elegans contain specific sphingoid bases, which are unique or different in structure compared to the sphingoid bases found in other animals. Two examples of these distinctive compounds are: 15-methylhexadecasphinganine and 15-methylhexadecasphing-4-enine (PubMed:30155209).</text>
</comment>
<comment type="catalytic activity">
    <reaction evidence="2">
        <text>an N-acylsphing-4-enine + ATP = an N-acylsphing-4-enine 1-phosphate + ADP + H(+)</text>
        <dbReference type="Rhea" id="RHEA:17929"/>
        <dbReference type="ChEBI" id="CHEBI:15378"/>
        <dbReference type="ChEBI" id="CHEBI:30616"/>
        <dbReference type="ChEBI" id="CHEBI:52639"/>
        <dbReference type="ChEBI" id="CHEBI:57674"/>
        <dbReference type="ChEBI" id="CHEBI:456216"/>
        <dbReference type="EC" id="2.7.1.138"/>
    </reaction>
    <physiologicalReaction direction="left-to-right" evidence="5">
        <dbReference type="Rhea" id="RHEA:17930"/>
    </physiologicalReaction>
</comment>
<comment type="catalytic activity">
    <reaction evidence="5">
        <text>an N-acyl-15-methylhexadecasphing-4-enine + ATP = an N-acyl-15-methylhexadecasphing-4-enine-1-phosphate + ADP + H(+)</text>
        <dbReference type="Rhea" id="RHEA:34751"/>
        <dbReference type="ChEBI" id="CHEBI:15378"/>
        <dbReference type="ChEBI" id="CHEBI:30616"/>
        <dbReference type="ChEBI" id="CHEBI:70846"/>
        <dbReference type="ChEBI" id="CHEBI:71156"/>
        <dbReference type="ChEBI" id="CHEBI:456216"/>
    </reaction>
    <physiologicalReaction direction="left-to-right" evidence="5">
        <dbReference type="Rhea" id="RHEA:34752"/>
    </physiologicalReaction>
</comment>
<comment type="pathway">
    <text>Lipid metabolism; sphingolipid metabolism.</text>
</comment>
<keyword id="KW-0067">ATP-binding</keyword>
<keyword id="KW-0418">Kinase</keyword>
<keyword id="KW-0443">Lipid metabolism</keyword>
<keyword id="KW-0547">Nucleotide-binding</keyword>
<keyword id="KW-1185">Reference proteome</keyword>
<keyword id="KW-0746">Sphingolipid metabolism</keyword>
<keyword id="KW-0808">Transferase</keyword>
<name>CERK_CAEEL</name>
<evidence type="ECO:0000250" key="1"/>
<evidence type="ECO:0000250" key="2">
    <source>
        <dbReference type="UniProtKB" id="Q8K4Q7"/>
    </source>
</evidence>
<evidence type="ECO:0000255" key="3">
    <source>
        <dbReference type="PROSITE-ProRule" id="PRU00783"/>
    </source>
</evidence>
<evidence type="ECO:0000269" key="4">
    <source>
    </source>
</evidence>
<evidence type="ECO:0000305" key="5"/>
<evidence type="ECO:0000312" key="6">
    <source>
        <dbReference type="WormBase" id="T10B11.2"/>
    </source>
</evidence>